<evidence type="ECO:0000250" key="1">
    <source>
        <dbReference type="UniProtKB" id="O70250"/>
    </source>
</evidence>
<evidence type="ECO:0000250" key="2">
    <source>
        <dbReference type="UniProtKB" id="P00950"/>
    </source>
</evidence>
<evidence type="ECO:0000250" key="3">
    <source>
        <dbReference type="UniProtKB" id="P16290"/>
    </source>
</evidence>
<evidence type="ECO:0000250" key="4">
    <source>
        <dbReference type="UniProtKB" id="P18669"/>
    </source>
</evidence>
<evidence type="ECO:0000269" key="5">
    <source>
    </source>
</evidence>
<evidence type="ECO:0000269" key="6">
    <source>
    </source>
</evidence>
<evidence type="ECO:0000269" key="7">
    <source>
    </source>
</evidence>
<evidence type="ECO:0000305" key="8"/>
<name>PGAM2_HUMAN</name>
<keyword id="KW-0225">Disease variant</keyword>
<keyword id="KW-0322">Glycogen storage disease</keyword>
<keyword id="KW-0324">Glycolysis</keyword>
<keyword id="KW-0378">Hydrolase</keyword>
<keyword id="KW-0413">Isomerase</keyword>
<keyword id="KW-0597">Phosphoprotein</keyword>
<keyword id="KW-1267">Proteomics identification</keyword>
<keyword id="KW-1185">Reference proteome</keyword>
<sequence>MATHRLVMVRHGESTWNQENRFCGWFDAELSEKGTEEAKRGAKAIKDAKMEFDICYTSVLKRAIRTLWAILDGTDQMWLPVVRTWRLNERHYGGLTGLNKAETAAKHGEEQVKIWRRSFDIPPPPMDEKHPYYNSISKERRYAGLKPGELPTCESLKDTIARALPFWNEEIVPQIKAGKRVLIAAHGNSLRGIVKHLEGMSDQAIMELNLPTGIPIVYELNKELKPTKPMQFLGDEETVRKAMEAVAAQGKAK</sequence>
<comment type="function">
    <text>Interconversion of 3- and 2-phosphoglycerate with 2,3-bisphosphoglycerate as the primer of the reaction. Can also catalyze the reaction of EC 5.4.2.4 (synthase), but with a reduced activity.</text>
</comment>
<comment type="catalytic activity">
    <reaction evidence="4">
        <text>(2R)-2-phosphoglycerate = (2R)-3-phosphoglycerate</text>
        <dbReference type="Rhea" id="RHEA:15901"/>
        <dbReference type="ChEBI" id="CHEBI:58272"/>
        <dbReference type="ChEBI" id="CHEBI:58289"/>
        <dbReference type="EC" id="5.4.2.11"/>
    </reaction>
</comment>
<comment type="catalytic activity">
    <reaction evidence="4">
        <text>(2R)-3-phospho-glyceroyl phosphate = (2R)-2,3-bisphosphoglycerate + H(+)</text>
        <dbReference type="Rhea" id="RHEA:17765"/>
        <dbReference type="ChEBI" id="CHEBI:15378"/>
        <dbReference type="ChEBI" id="CHEBI:57604"/>
        <dbReference type="ChEBI" id="CHEBI:58248"/>
        <dbReference type="EC" id="5.4.2.4"/>
    </reaction>
</comment>
<comment type="subunit">
    <text evidence="1 4">Homodimer. Interacts with ENO1.</text>
</comment>
<comment type="interaction">
    <interactant intactId="EBI-2511669">
        <id>P15259</id>
    </interactant>
    <interactant intactId="EBI-2115835">
        <id>P07738</id>
        <label>BPGM</label>
    </interactant>
    <organismsDiffer>false</organismsDiffer>
    <experiments>6</experiments>
</comment>
<comment type="interaction">
    <interactant intactId="EBI-2511669">
        <id>P15259</id>
    </interactant>
    <interactant intactId="EBI-12357161">
        <id>Q5SYC1</id>
        <label>CLVS2</label>
    </interactant>
    <organismsDiffer>false</organismsDiffer>
    <experiments>3</experiments>
</comment>
<comment type="interaction">
    <interactant intactId="EBI-2511669">
        <id>P15259</id>
    </interactant>
    <interactant intactId="EBI-2556107">
        <id>Q9Y6G9</id>
        <label>DYNC1LI1</label>
    </interactant>
    <organismsDiffer>false</organismsDiffer>
    <experiments>3</experiments>
</comment>
<comment type="interaction">
    <interactant intactId="EBI-2511669">
        <id>P15259</id>
    </interactant>
    <interactant intactId="EBI-743591">
        <id>Q9BW62</id>
        <label>KATNAL1</label>
    </interactant>
    <organismsDiffer>false</organismsDiffer>
    <experiments>3</experiments>
</comment>
<comment type="interaction">
    <interactant intactId="EBI-2511669">
        <id>P15259</id>
    </interactant>
    <interactant intactId="EBI-2511669">
        <id>P15259</id>
        <label>PGAM2</label>
    </interactant>
    <organismsDiffer>false</organismsDiffer>
    <experiments>3</experiments>
</comment>
<comment type="tissue specificity">
    <text evidence="6">Expressed in the heart and muscle. Not found in the liver and brain.</text>
</comment>
<comment type="disease" evidence="5 7">
    <disease id="DI-02572">
        <name>Glycogen storage disease 10</name>
        <acronym>GSD10</acronym>
        <description>A metabolic disorder characterized by myoglobinuria, increased serum creatine kinase levels, decreased phosphoglycerate mutase activity, myalgia, muscle pain, muscle cramps, exercise intolerance.</description>
        <dbReference type="MIM" id="261670"/>
    </disease>
    <text>The disease is caused by variants affecting the gene represented in this entry.</text>
</comment>
<comment type="similarity">
    <text evidence="8">Belongs to the phosphoglycerate mutase family. BPG-dependent PGAM subfamily.</text>
</comment>
<reference key="1">
    <citation type="journal article" date="1990" name="Gene">
        <title>Isolation and characterization of the gene encoding the muscle-specific isozyme of human phosphoglycerate mutase.</title>
        <authorList>
            <person name="Castella-Escola J."/>
            <person name="Ojcius D.M."/>
            <person name="Leboulch P."/>
            <person name="Joulin V."/>
            <person name="Blouquit Y."/>
            <person name="Garel M.-C."/>
            <person name="Valentin C."/>
            <person name="Rosa R."/>
            <person name="Climent-Romeo F."/>
            <person name="Cohen-Solal M."/>
        </authorList>
    </citation>
    <scope>NUCLEOTIDE SEQUENCE [GENOMIC DNA]</scope>
</reference>
<reference key="2">
    <citation type="journal article" date="1989" name="J. Biol. Chem.">
        <title>Structure of the gene encoding the muscle-specific subunit of human phosphoglycerate mutase.</title>
        <authorList>
            <person name="Tsujino S."/>
            <person name="Sakoda S."/>
            <person name="Mizuno R."/>
            <person name="Kobayashi T."/>
            <person name="Suzuki T."/>
            <person name="Kishimoto S."/>
            <person name="Shanske S."/>
            <person name="Dimauro S."/>
            <person name="Schon E.A."/>
        </authorList>
    </citation>
    <scope>NUCLEOTIDE SEQUENCE [GENOMIC DNA]</scope>
</reference>
<reference key="3">
    <citation type="journal article" date="1987" name="J. Biol. Chem.">
        <title>Isolation of a cDNA encoding the muscle-specific subunit of human phosphoglycerate mutase.</title>
        <authorList>
            <person name="Shanske S."/>
            <person name="Sakoda S."/>
            <person name="Hermodson M.A."/>
            <person name="Dimauro S."/>
            <person name="Schon E.A."/>
        </authorList>
    </citation>
    <scope>NUCLEOTIDE SEQUENCE [MRNA]</scope>
    <scope>TISSUE SPECIFICITY</scope>
</reference>
<reference key="4">
    <citation type="journal article" date="2004" name="Genome Res.">
        <title>The status, quality, and expansion of the NIH full-length cDNA project: the Mammalian Gene Collection (MGC).</title>
        <authorList>
            <consortium name="The MGC Project Team"/>
        </authorList>
    </citation>
    <scope>NUCLEOTIDE SEQUENCE [LARGE SCALE MRNA]</scope>
    <source>
        <tissue>Lung</tissue>
    </source>
</reference>
<reference key="5">
    <citation type="journal article" date="1993" name="Am. J. Hum. Genet.">
        <title>The molecular genetic basis of muscle phosphoglycerate mutase (PGAM) deficiency.</title>
        <authorList>
            <person name="Tsujino S."/>
            <person name="Shanske S."/>
            <person name="Sakoda S."/>
            <person name="Fenichel G."/>
            <person name="Dimauro S."/>
        </authorList>
    </citation>
    <scope>VARIANTS GSD10 ALA-89 AND TRP-90</scope>
</reference>
<reference key="6">
    <citation type="journal article" date="1999" name="Neuromuscul. Disord.">
        <title>Manifesting heterozygotes in a Japanese family with a novel mutation in the muscle-specific phosphoglycerate mutase (PGAM-M) gene.</title>
        <authorList>
            <person name="Hadjigeorgiou G.M."/>
            <person name="Kawashima N."/>
            <person name="Bruno C."/>
            <person name="Andreu A.L."/>
            <person name="Sue C.M."/>
            <person name="Rigden D.J."/>
            <person name="Kawashima A."/>
            <person name="Shanske S."/>
            <person name="DiMauro S."/>
        </authorList>
    </citation>
    <scope>VARIANT GSD10 ASP-97</scope>
</reference>
<protein>
    <recommendedName>
        <fullName>Phosphoglycerate mutase 2</fullName>
        <ecNumber evidence="4">5.4.2.11</ecNumber>
        <ecNumber evidence="4">5.4.2.4</ecNumber>
    </recommendedName>
    <alternativeName>
        <fullName>BPG-dependent PGAM 2</fullName>
    </alternativeName>
    <alternativeName>
        <fullName>Muscle-specific phosphoglycerate mutase</fullName>
    </alternativeName>
    <alternativeName>
        <fullName>Phosphoglycerate mutase isozyme M</fullName>
        <shortName>PGAM-M</shortName>
    </alternativeName>
</protein>
<dbReference type="EC" id="5.4.2.11" evidence="4"/>
<dbReference type="EC" id="5.4.2.4" evidence="4"/>
<dbReference type="EMBL" id="M55674">
    <property type="protein sequence ID" value="AAA64238.1"/>
    <property type="molecule type" value="Genomic_DNA"/>
</dbReference>
<dbReference type="EMBL" id="M55673">
    <property type="protein sequence ID" value="AAA64238.1"/>
    <property type="status" value="JOINED"/>
    <property type="molecule type" value="Genomic_DNA"/>
</dbReference>
<dbReference type="EMBL" id="J05073">
    <property type="protein sequence ID" value="AAA60073.1"/>
    <property type="molecule type" value="Genomic_DNA"/>
</dbReference>
<dbReference type="EMBL" id="M18172">
    <property type="protein sequence ID" value="AAA60072.1"/>
    <property type="molecule type" value="mRNA"/>
</dbReference>
<dbReference type="EMBL" id="BC001904">
    <property type="protein sequence ID" value="AAH01904.1"/>
    <property type="molecule type" value="mRNA"/>
</dbReference>
<dbReference type="EMBL" id="BC073741">
    <property type="protein sequence ID" value="AAH73741.1"/>
    <property type="molecule type" value="mRNA"/>
</dbReference>
<dbReference type="CCDS" id="CCDS34624.1"/>
<dbReference type="PIR" id="JQ0750">
    <property type="entry name" value="PMHUYM"/>
</dbReference>
<dbReference type="RefSeq" id="NP_000281.2">
    <property type="nucleotide sequence ID" value="NM_000290.4"/>
</dbReference>
<dbReference type="SMR" id="P15259"/>
<dbReference type="BioGRID" id="111245">
    <property type="interactions" value="82"/>
</dbReference>
<dbReference type="FunCoup" id="P15259">
    <property type="interactions" value="1053"/>
</dbReference>
<dbReference type="IntAct" id="P15259">
    <property type="interactions" value="52"/>
</dbReference>
<dbReference type="STRING" id="9606.ENSP00000297283"/>
<dbReference type="DrugBank" id="DB04510">
    <property type="generic name" value="3-phospho-D-glyceric acid"/>
</dbReference>
<dbReference type="DrugBank" id="DB01681">
    <property type="generic name" value="Benzene Hexacarboxylic Acid"/>
</dbReference>
<dbReference type="DEPOD" id="PGAM2"/>
<dbReference type="iPTMnet" id="P15259"/>
<dbReference type="PhosphoSitePlus" id="P15259"/>
<dbReference type="SwissPalm" id="P15259"/>
<dbReference type="BioMuta" id="PGAM2"/>
<dbReference type="DMDM" id="130353"/>
<dbReference type="jPOST" id="P15259"/>
<dbReference type="MassIVE" id="P15259"/>
<dbReference type="PaxDb" id="9606-ENSP00000297283"/>
<dbReference type="PeptideAtlas" id="P15259"/>
<dbReference type="PRIDE" id="P15259"/>
<dbReference type="ProteomicsDB" id="53121"/>
<dbReference type="Pumba" id="P15259"/>
<dbReference type="Antibodypedia" id="26984">
    <property type="antibodies" value="372 antibodies from 27 providers"/>
</dbReference>
<dbReference type="DNASU" id="5224"/>
<dbReference type="Ensembl" id="ENST00000297283.4">
    <property type="protein sequence ID" value="ENSP00000297283.3"/>
    <property type="gene ID" value="ENSG00000164708.6"/>
</dbReference>
<dbReference type="GeneID" id="5224"/>
<dbReference type="KEGG" id="hsa:5224"/>
<dbReference type="MANE-Select" id="ENST00000297283.4">
    <property type="protein sequence ID" value="ENSP00000297283.3"/>
    <property type="RefSeq nucleotide sequence ID" value="NM_000290.4"/>
    <property type="RefSeq protein sequence ID" value="NP_000281.2"/>
</dbReference>
<dbReference type="UCSC" id="uc003tjs.3">
    <property type="organism name" value="human"/>
</dbReference>
<dbReference type="AGR" id="HGNC:8889"/>
<dbReference type="CTD" id="5224"/>
<dbReference type="DisGeNET" id="5224"/>
<dbReference type="GeneCards" id="PGAM2"/>
<dbReference type="HGNC" id="HGNC:8889">
    <property type="gene designation" value="PGAM2"/>
</dbReference>
<dbReference type="HPA" id="ENSG00000164708">
    <property type="expression patterns" value="Group enriched (heart muscle, skeletal muscle, tongue)"/>
</dbReference>
<dbReference type="MalaCards" id="PGAM2"/>
<dbReference type="MIM" id="261670">
    <property type="type" value="phenotype"/>
</dbReference>
<dbReference type="MIM" id="612931">
    <property type="type" value="gene"/>
</dbReference>
<dbReference type="neXtProt" id="NX_P15259"/>
<dbReference type="OpenTargets" id="ENSG00000164708"/>
<dbReference type="Orphanet" id="97234">
    <property type="disease" value="Glycogen storage disease due to phosphoglycerate mutase deficiency"/>
</dbReference>
<dbReference type="PharmGKB" id="PA33226"/>
<dbReference type="VEuPathDB" id="HostDB:ENSG00000164708"/>
<dbReference type="eggNOG" id="KOG0235">
    <property type="taxonomic scope" value="Eukaryota"/>
</dbReference>
<dbReference type="GeneTree" id="ENSGT00950000182926"/>
<dbReference type="HOGENOM" id="CLU_033323_1_1_1"/>
<dbReference type="InParanoid" id="P15259"/>
<dbReference type="OMA" id="MDDKHPY"/>
<dbReference type="OrthoDB" id="354304at2759"/>
<dbReference type="PAN-GO" id="P15259">
    <property type="GO annotations" value="0 GO annotations based on evolutionary models"/>
</dbReference>
<dbReference type="PhylomeDB" id="P15259"/>
<dbReference type="TreeFam" id="TF300007"/>
<dbReference type="BioCyc" id="MetaCyc:HS09121-MONOMER"/>
<dbReference type="BRENDA" id="5.4.2.11">
    <property type="organism ID" value="2681"/>
</dbReference>
<dbReference type="PathwayCommons" id="P15259"/>
<dbReference type="Reactome" id="R-HSA-70171">
    <property type="pathway name" value="Glycolysis"/>
</dbReference>
<dbReference type="Reactome" id="R-HSA-70263">
    <property type="pathway name" value="Gluconeogenesis"/>
</dbReference>
<dbReference type="SignaLink" id="P15259"/>
<dbReference type="SIGNOR" id="P15259"/>
<dbReference type="BioGRID-ORCS" id="5224">
    <property type="hits" value="16 hits in 1167 CRISPR screens"/>
</dbReference>
<dbReference type="ChiTaRS" id="PGAM2">
    <property type="organism name" value="human"/>
</dbReference>
<dbReference type="GenomeRNAi" id="5224"/>
<dbReference type="Pharos" id="P15259">
    <property type="development level" value="Tbio"/>
</dbReference>
<dbReference type="PRO" id="PR:P15259"/>
<dbReference type="Proteomes" id="UP000005640">
    <property type="component" value="Chromosome 7"/>
</dbReference>
<dbReference type="RNAct" id="P15259">
    <property type="molecule type" value="protein"/>
</dbReference>
<dbReference type="Bgee" id="ENSG00000164708">
    <property type="expression patterns" value="Expressed in apex of heart and 124 other cell types or tissues"/>
</dbReference>
<dbReference type="GO" id="GO:0005829">
    <property type="term" value="C:cytosol"/>
    <property type="evidence" value="ECO:0000304"/>
    <property type="project" value="Reactome"/>
</dbReference>
<dbReference type="GO" id="GO:0070062">
    <property type="term" value="C:extracellular exosome"/>
    <property type="evidence" value="ECO:0007005"/>
    <property type="project" value="UniProtKB"/>
</dbReference>
<dbReference type="GO" id="GO:0005634">
    <property type="term" value="C:nucleus"/>
    <property type="evidence" value="ECO:0007005"/>
    <property type="project" value="UniProtKB"/>
</dbReference>
<dbReference type="GO" id="GO:0004082">
    <property type="term" value="F:bisphosphoglycerate mutase activity"/>
    <property type="evidence" value="ECO:0007669"/>
    <property type="project" value="UniProtKB-EC"/>
</dbReference>
<dbReference type="GO" id="GO:0016787">
    <property type="term" value="F:hydrolase activity"/>
    <property type="evidence" value="ECO:0007669"/>
    <property type="project" value="UniProtKB-KW"/>
</dbReference>
<dbReference type="GO" id="GO:0042802">
    <property type="term" value="F:identical protein binding"/>
    <property type="evidence" value="ECO:0000353"/>
    <property type="project" value="IntAct"/>
</dbReference>
<dbReference type="GO" id="GO:0004619">
    <property type="term" value="F:phosphoglycerate mutase activity"/>
    <property type="evidence" value="ECO:0000315"/>
    <property type="project" value="UniProtKB"/>
</dbReference>
<dbReference type="GO" id="GO:0061621">
    <property type="term" value="P:canonical glycolysis"/>
    <property type="evidence" value="ECO:0000304"/>
    <property type="project" value="Reactome"/>
</dbReference>
<dbReference type="GO" id="GO:0006094">
    <property type="term" value="P:gluconeogenesis"/>
    <property type="evidence" value="ECO:0000304"/>
    <property type="project" value="Reactome"/>
</dbReference>
<dbReference type="GO" id="GO:0006096">
    <property type="term" value="P:glycolytic process"/>
    <property type="evidence" value="ECO:0000315"/>
    <property type="project" value="UniProtKB"/>
</dbReference>
<dbReference type="GO" id="GO:0007219">
    <property type="term" value="P:Notch signaling pathway"/>
    <property type="evidence" value="ECO:0007669"/>
    <property type="project" value="Ensembl"/>
</dbReference>
<dbReference type="GO" id="GO:0046689">
    <property type="term" value="P:response to mercury ion"/>
    <property type="evidence" value="ECO:0007669"/>
    <property type="project" value="Ensembl"/>
</dbReference>
<dbReference type="GO" id="GO:0007283">
    <property type="term" value="P:spermatogenesis"/>
    <property type="evidence" value="ECO:0007669"/>
    <property type="project" value="Ensembl"/>
</dbReference>
<dbReference type="GO" id="GO:0006941">
    <property type="term" value="P:striated muscle contraction"/>
    <property type="evidence" value="ECO:0000315"/>
    <property type="project" value="UniProtKB"/>
</dbReference>
<dbReference type="CDD" id="cd07067">
    <property type="entry name" value="HP_PGM_like"/>
    <property type="match status" value="1"/>
</dbReference>
<dbReference type="FunFam" id="3.40.50.1240:FF:000007">
    <property type="entry name" value="Phosphoglycerate mutase"/>
    <property type="match status" value="1"/>
</dbReference>
<dbReference type="Gene3D" id="3.40.50.1240">
    <property type="entry name" value="Phosphoglycerate mutase-like"/>
    <property type="match status" value="1"/>
</dbReference>
<dbReference type="HAMAP" id="MF_01039">
    <property type="entry name" value="PGAM_GpmA"/>
    <property type="match status" value="1"/>
</dbReference>
<dbReference type="InterPro" id="IPR013078">
    <property type="entry name" value="His_Pase_superF_clade-1"/>
</dbReference>
<dbReference type="InterPro" id="IPR029033">
    <property type="entry name" value="His_PPase_superfam"/>
</dbReference>
<dbReference type="InterPro" id="IPR001345">
    <property type="entry name" value="PG/BPGM_mutase_AS"/>
</dbReference>
<dbReference type="InterPro" id="IPR005952">
    <property type="entry name" value="Phosphogly_mut1"/>
</dbReference>
<dbReference type="NCBIfam" id="TIGR01258">
    <property type="entry name" value="pgm_1"/>
    <property type="match status" value="1"/>
</dbReference>
<dbReference type="NCBIfam" id="NF010713">
    <property type="entry name" value="PRK14115.1"/>
    <property type="match status" value="1"/>
</dbReference>
<dbReference type="PANTHER" id="PTHR11931">
    <property type="entry name" value="PHOSPHOGLYCERATE MUTASE"/>
    <property type="match status" value="1"/>
</dbReference>
<dbReference type="Pfam" id="PF00300">
    <property type="entry name" value="His_Phos_1"/>
    <property type="match status" value="1"/>
</dbReference>
<dbReference type="PIRSF" id="PIRSF000709">
    <property type="entry name" value="6PFK_2-Ptase"/>
    <property type="match status" value="1"/>
</dbReference>
<dbReference type="SMART" id="SM00855">
    <property type="entry name" value="PGAM"/>
    <property type="match status" value="1"/>
</dbReference>
<dbReference type="SUPFAM" id="SSF53254">
    <property type="entry name" value="Phosphoglycerate mutase-like"/>
    <property type="match status" value="1"/>
</dbReference>
<dbReference type="PROSITE" id="PS00175">
    <property type="entry name" value="PG_MUTASE"/>
    <property type="match status" value="1"/>
</dbReference>
<proteinExistence type="evidence at protein level"/>
<accession>P15259</accession>
<gene>
    <name type="primary">PGAM2</name>
    <name type="synonym">PGAMM</name>
</gene>
<feature type="chain" id="PRO_0000179829" description="Phosphoglycerate mutase 2">
    <location>
        <begin position="1"/>
        <end position="253"/>
    </location>
</feature>
<feature type="active site" description="Tele-phosphohistidine intermediate" evidence="4">
    <location>
        <position position="11"/>
    </location>
</feature>
<feature type="active site" description="Proton donor/acceptor" evidence="4">
    <location>
        <position position="89"/>
    </location>
</feature>
<feature type="binding site" evidence="2">
    <location>
        <begin position="10"/>
        <end position="17"/>
    </location>
    <ligand>
        <name>substrate</name>
    </ligand>
</feature>
<feature type="binding site" evidence="2">
    <location>
        <begin position="23"/>
        <end position="24"/>
    </location>
    <ligand>
        <name>substrate</name>
    </ligand>
</feature>
<feature type="binding site" evidence="2">
    <location>
        <position position="62"/>
    </location>
    <ligand>
        <name>substrate</name>
    </ligand>
</feature>
<feature type="binding site" evidence="2">
    <location>
        <begin position="89"/>
        <end position="92"/>
    </location>
    <ligand>
        <name>substrate</name>
    </ligand>
</feature>
<feature type="binding site" evidence="2">
    <location>
        <position position="100"/>
    </location>
    <ligand>
        <name>substrate</name>
    </ligand>
</feature>
<feature type="binding site" evidence="2">
    <location>
        <begin position="116"/>
        <end position="117"/>
    </location>
    <ligand>
        <name>substrate</name>
    </ligand>
</feature>
<feature type="binding site" evidence="2">
    <location>
        <begin position="187"/>
        <end position="188"/>
    </location>
    <ligand>
        <name>substrate</name>
    </ligand>
</feature>
<feature type="site" description="Transition state stabilizer" evidence="2">
    <location>
        <position position="186"/>
    </location>
</feature>
<feature type="modified residue" description="Phosphothreonine" evidence="3">
    <location>
        <position position="3"/>
    </location>
</feature>
<feature type="modified residue" description="Phosphoserine" evidence="3">
    <location>
        <position position="14"/>
    </location>
</feature>
<feature type="modified residue" description="Phosphoserine" evidence="1">
    <location>
        <position position="118"/>
    </location>
</feature>
<feature type="modified residue" description="Phosphotyrosine" evidence="3">
    <location>
        <position position="132"/>
    </location>
</feature>
<feature type="modified residue" description="Phosphotyrosine" evidence="3">
    <location>
        <position position="133"/>
    </location>
</feature>
<feature type="modified residue" description="Phosphoserine" evidence="3">
    <location>
        <position position="135"/>
    </location>
</feature>
<feature type="modified residue" description="Phosphothreonine" evidence="3">
    <location>
        <position position="152"/>
    </location>
</feature>
<feature type="sequence variant" id="VAR_006088" description="In GSD10; dbSNP:rs104894030." evidence="7">
    <original>E</original>
    <variation>A</variation>
    <location>
        <position position="89"/>
    </location>
</feature>
<feature type="sequence variant" id="VAR_006089" description="In GSD10; dbSNP:rs104894034." evidence="7">
    <original>R</original>
    <variation>W</variation>
    <location>
        <position position="90"/>
    </location>
</feature>
<feature type="sequence variant" id="VAR_013103" description="In GSD10; dbSNP:rs77938727." evidence="5">
    <original>G</original>
    <variation>D</variation>
    <location>
        <position position="97"/>
    </location>
</feature>
<feature type="sequence conflict" description="In Ref. 3; AAA60072." evidence="8" ref="3">
    <original>S</original>
    <variation>T</variation>
    <location>
        <position position="14"/>
    </location>
</feature>
<feature type="sequence conflict" description="In Ref. 2; AAA60073." evidence="8" ref="2">
    <original>R</original>
    <variation>P</variation>
    <location>
        <position position="65"/>
    </location>
</feature>
<feature type="sequence conflict" description="In Ref. 2." evidence="8" ref="2">
    <original>W</original>
    <variation>C</variation>
    <location>
        <position position="85"/>
    </location>
</feature>
<feature type="sequence conflict" description="In Ref. 2 and 3." evidence="8" ref="2 3">
    <original>L</original>
    <variation>F</variation>
    <location>
        <position position="87"/>
    </location>
</feature>
<feature type="sequence conflict" description="In Ref. 3; AAA60072." evidence="8" ref="3">
    <original>L</original>
    <variation>F</variation>
    <location>
        <position position="98"/>
    </location>
</feature>
<feature type="sequence conflict" description="In Ref. 3; AAA60072." evidence="8" ref="3">
    <original>KI</original>
    <variation>RS</variation>
    <location>
        <begin position="113"/>
        <end position="114"/>
    </location>
</feature>
<organism>
    <name type="scientific">Homo sapiens</name>
    <name type="common">Human</name>
    <dbReference type="NCBI Taxonomy" id="9606"/>
    <lineage>
        <taxon>Eukaryota</taxon>
        <taxon>Metazoa</taxon>
        <taxon>Chordata</taxon>
        <taxon>Craniata</taxon>
        <taxon>Vertebrata</taxon>
        <taxon>Euteleostomi</taxon>
        <taxon>Mammalia</taxon>
        <taxon>Eutheria</taxon>
        <taxon>Euarchontoglires</taxon>
        <taxon>Primates</taxon>
        <taxon>Haplorrhini</taxon>
        <taxon>Catarrhini</taxon>
        <taxon>Hominidae</taxon>
        <taxon>Homo</taxon>
    </lineage>
</organism>